<dbReference type="EC" id="4.4.1.24" evidence="2"/>
<dbReference type="EMBL" id="CP000285">
    <property type="protein sequence ID" value="ABE59118.1"/>
    <property type="molecule type" value="Genomic_DNA"/>
</dbReference>
<dbReference type="RefSeq" id="WP_011507064.1">
    <property type="nucleotide sequence ID" value="NC_007963.1"/>
</dbReference>
<dbReference type="SMR" id="Q1QWP0"/>
<dbReference type="STRING" id="290398.Csal_1766"/>
<dbReference type="GeneID" id="95334478"/>
<dbReference type="KEGG" id="csa:Csal_1766"/>
<dbReference type="eggNOG" id="COG2721">
    <property type="taxonomic scope" value="Bacteria"/>
</dbReference>
<dbReference type="HOGENOM" id="CLU_029189_1_0_6"/>
<dbReference type="OrthoDB" id="9804574at2"/>
<dbReference type="BioCyc" id="MetaCyc:MONOMER-15870"/>
<dbReference type="Proteomes" id="UP000000239">
    <property type="component" value="Chromosome"/>
</dbReference>
<dbReference type="GO" id="GO:0005737">
    <property type="term" value="C:cytoplasm"/>
    <property type="evidence" value="ECO:0007669"/>
    <property type="project" value="UniProtKB-SubCell"/>
</dbReference>
<dbReference type="GO" id="GO:0034010">
    <property type="term" value="F:sulfolactate sulfo-lyase activity"/>
    <property type="evidence" value="ECO:0007669"/>
    <property type="project" value="UniProtKB-EC"/>
</dbReference>
<dbReference type="GO" id="GO:0019698">
    <property type="term" value="P:D-galacturonate catabolic process"/>
    <property type="evidence" value="ECO:0007669"/>
    <property type="project" value="TreeGrafter"/>
</dbReference>
<dbReference type="InterPro" id="IPR048332">
    <property type="entry name" value="GD_AH_C"/>
</dbReference>
<dbReference type="InterPro" id="IPR007392">
    <property type="entry name" value="GD_AH_second"/>
</dbReference>
<dbReference type="InterPro" id="IPR052172">
    <property type="entry name" value="UxaA_altronate/galactarate_dh"/>
</dbReference>
<dbReference type="PANTHER" id="PTHR30536:SF5">
    <property type="entry name" value="ALTRONATE DEHYDRATASE"/>
    <property type="match status" value="1"/>
</dbReference>
<dbReference type="PANTHER" id="PTHR30536">
    <property type="entry name" value="ALTRONATE/GALACTARATE DEHYDRATASE"/>
    <property type="match status" value="1"/>
</dbReference>
<dbReference type="Pfam" id="PF20629">
    <property type="entry name" value="GD_AH_C"/>
    <property type="match status" value="1"/>
</dbReference>
<dbReference type="Pfam" id="PF04295">
    <property type="entry name" value="GD_AH_second"/>
    <property type="match status" value="1"/>
</dbReference>
<comment type="function">
    <text evidence="2">Together with SuyA, desulfonates sulfolactate to pyruvate and sulfite.</text>
</comment>
<comment type="catalytic activity">
    <reaction evidence="2">
        <text>(2R)-3-sulfolactate = sulfite + pyruvate + H(+)</text>
        <dbReference type="Rhea" id="RHEA:21428"/>
        <dbReference type="ChEBI" id="CHEBI:15361"/>
        <dbReference type="ChEBI" id="CHEBI:15378"/>
        <dbReference type="ChEBI" id="CHEBI:17359"/>
        <dbReference type="ChEBI" id="CHEBI:58738"/>
        <dbReference type="EC" id="4.4.1.24"/>
    </reaction>
</comment>
<comment type="subunit">
    <text evidence="2">(2R)-sulfolactate sulfo-lyase is composed of a SuyA and a SuyB subunit.</text>
</comment>
<comment type="subcellular location">
    <subcellularLocation>
        <location evidence="1">Cytoplasm</location>
    </subcellularLocation>
</comment>
<comment type="similarity">
    <text evidence="3">Belongs to the UxaA family.</text>
</comment>
<name>SUYB_CHRSD</name>
<keyword id="KW-0963">Cytoplasm</keyword>
<keyword id="KW-0456">Lyase</keyword>
<keyword id="KW-1185">Reference proteome</keyword>
<gene>
    <name type="primary">suyB</name>
    <name type="ordered locus">Csal_1766</name>
</gene>
<sequence length="389" mass="42228">MELKGRTFLGYRRDNGRVGIRNHVIVLPVDDISNAAAEAVANNIKGTLALPHPYGRLQFGADLDLHFRTLIGTGCNPNVAAVIVIGIEPGWTGKVVDGIRATGKPVEGFWIEQNGDHNTIANASRKAREFVQYASELQREPCDVSELWVSTKCGESDTTSGCGANPTVGEAFDKLYEQGCTLVFGETSELTGGEHLVAARCANDDVRERFQAMFDRYSAMIDRHKTSDLSESQPTKGNIEGGLTTIEEKALGNIQKIGKRCRVDGVLDKAETPTGPGLWFMDSSSAAAEMVTLCAASGYVAHFFPTGQGNVIGNPILPVIKLCANPRTVRTMSEHIDVDVSGVLRREINLQEAGDQLLEMLLRTANGRHTNAEALGHREFVLTRLYESA</sequence>
<feature type="chain" id="PRO_0000418744" description="(2R)-sulfolactate sulfo-lyase subunit beta">
    <location>
        <begin position="1"/>
        <end position="389"/>
    </location>
</feature>
<proteinExistence type="evidence at protein level"/>
<organism>
    <name type="scientific">Chromohalobacter salexigens (strain ATCC BAA-138 / DSM 3043 / CIP 106854 / NCIMB 13768 / 1H11)</name>
    <dbReference type="NCBI Taxonomy" id="290398"/>
    <lineage>
        <taxon>Bacteria</taxon>
        <taxon>Pseudomonadati</taxon>
        <taxon>Pseudomonadota</taxon>
        <taxon>Gammaproteobacteria</taxon>
        <taxon>Oceanospirillales</taxon>
        <taxon>Halomonadaceae</taxon>
        <taxon>Chromohalobacter</taxon>
    </lineage>
</organism>
<accession>Q1QWP0</accession>
<evidence type="ECO:0000250" key="1"/>
<evidence type="ECO:0000269" key="2">
    <source>
    </source>
</evidence>
<evidence type="ECO:0000305" key="3"/>
<protein>
    <recommendedName>
        <fullName>(2R)-sulfolactate sulfo-lyase subunit beta</fullName>
        <ecNumber evidence="2">4.4.1.24</ecNumber>
    </recommendedName>
    <alternativeName>
        <fullName>Sulfolactate sulfo-lyase B</fullName>
    </alternativeName>
</protein>
<reference key="1">
    <citation type="journal article" date="2011" name="Stand. Genomic Sci.">
        <title>Complete genome sequence of the halophilic and highly halotolerant Chromohalobacter salexigens type strain (1H11(T)).</title>
        <authorList>
            <person name="Copeland A."/>
            <person name="O'Connor K."/>
            <person name="Lucas S."/>
            <person name="Lapidus A."/>
            <person name="Berry K.W."/>
            <person name="Detter J.C."/>
            <person name="Del Rio T.G."/>
            <person name="Hammon N."/>
            <person name="Dalin E."/>
            <person name="Tice H."/>
            <person name="Pitluck S."/>
            <person name="Bruce D."/>
            <person name="Goodwin L."/>
            <person name="Han C."/>
            <person name="Tapia R."/>
            <person name="Saunders E."/>
            <person name="Schmutz J."/>
            <person name="Brettin T."/>
            <person name="Larimer F."/>
            <person name="Land M."/>
            <person name="Hauser L."/>
            <person name="Vargas C."/>
            <person name="Nieto J.J."/>
            <person name="Kyrpides N.C."/>
            <person name="Ivanova N."/>
            <person name="Goker M."/>
            <person name="Klenk H.P."/>
            <person name="Csonka L.N."/>
            <person name="Woyke T."/>
        </authorList>
    </citation>
    <scope>NUCLEOTIDE SEQUENCE [LARGE SCALE GENOMIC DNA]</scope>
    <source>
        <strain>ATCC BAA-138 / DSM 3043 / CIP 106854 / NCIMB 13768 / 1H11</strain>
    </source>
</reference>
<reference key="2">
    <citation type="journal article" date="2010" name="Microbiology">
        <title>Racemase activity effected by two dehydrogenases in sulfolactate degradation by Chromohalobacter salexigens: purification of (S)-sulfolactate dehydrogenase.</title>
        <authorList>
            <person name="Denger K."/>
            <person name="Cook A.M."/>
        </authorList>
    </citation>
    <scope>FUNCTION</scope>
    <scope>CATALYTIC ACTIVITY</scope>
    <scope>SUBUNIT</scope>
    <source>
        <strain>ATCC BAA-138 / DSM 3043 / CIP 106854 / NCIMB 13768 / 1H11</strain>
    </source>
</reference>